<keyword id="KW-0227">DNA damage</keyword>
<keyword id="KW-0234">DNA repair</keyword>
<keyword id="KW-1185">Reference proteome</keyword>
<reference key="1">
    <citation type="journal article" date="2008" name="J. Bacteriol.">
        <title>Genome sequence of the chemolithoautotrophic bacterium Oligotropha carboxidovorans OM5T.</title>
        <authorList>
            <person name="Paul D."/>
            <person name="Bridges S."/>
            <person name="Burgess S.C."/>
            <person name="Dandass Y."/>
            <person name="Lawrence M.L."/>
        </authorList>
    </citation>
    <scope>NUCLEOTIDE SEQUENCE [LARGE SCALE GENOMIC DNA]</scope>
    <source>
        <strain>ATCC 49405 / DSM 1227 / KCTC 32145 / OM5</strain>
    </source>
</reference>
<reference key="2">
    <citation type="journal article" date="2011" name="J. Bacteriol.">
        <title>Complete genome sequences of the chemolithoautotrophic Oligotropha carboxidovorans strains OM4 and OM5.</title>
        <authorList>
            <person name="Volland S."/>
            <person name="Rachinger M."/>
            <person name="Strittmatter A."/>
            <person name="Daniel R."/>
            <person name="Gottschalk G."/>
            <person name="Meyer O."/>
        </authorList>
    </citation>
    <scope>NUCLEOTIDE SEQUENCE [LARGE SCALE GENOMIC DNA]</scope>
    <source>
        <strain>ATCC 49405 / DSM 1227 / KCTC 32145 / OM5</strain>
    </source>
</reference>
<evidence type="ECO:0000255" key="1">
    <source>
        <dbReference type="HAMAP-Rule" id="MF_00149"/>
    </source>
</evidence>
<sequence length="612" mass="66004">MPVRQLPEQIVNRIAAGEVVERPASAVKELVENAIDAGGTRIDIFTEGGGRRRIVITDDGSGMTQGDLALAVERHATSKLDDEDLLRIRTLGFRGEALPSISSVAKLAITTRHAAEPHAWAVEVDAGAKSAIAPAALQRGTRVEVSDLFYATPARLKFLKTDRTEAEAIREVVRRLAMARPDIAFTLAGEERAPVTWAAALPGAPGRLTRLGDILGSDFRTHAIEVGSEREGVSVEGFAAAPSLTRANALGQYLFVNGRPVRDKLILGAVRAAYADYLPRDRHPIVALFVTLDPQEVDANVHPAKTEVRFRNAGLVRALIVHALKDGLAREGRRTAANTNGAAITTAFRTEGFSREGFARESLPRGGYDWRSSPAAPWPPQAAAQAPAMGFDESAQAAFDAGAPSADTRGNEAPLGDALGRPLGAARTQIHENYIVAQTNDGLILVDQHAAHERIVYERLKASLTKNGVARQMLLIPEIVEMDEASVEKLLARASELEKYGLSIESFGPGAVAVRETPALLGKANAASLLRDLAEHMAEWDEALPLERRLMHVAATMACHGSVRSGRILKVEEMNALLREMEATPNSGQCNHGRPTYVELKLADIEKLFGRR</sequence>
<feature type="chain" id="PRO_1000096668" description="DNA mismatch repair protein MutL">
    <location>
        <begin position="1"/>
        <end position="612"/>
    </location>
</feature>
<dbReference type="EMBL" id="CP001196">
    <property type="protein sequence ID" value="ACI94345.1"/>
    <property type="molecule type" value="Genomic_DNA"/>
</dbReference>
<dbReference type="EMBL" id="CP002826">
    <property type="protein sequence ID" value="AEI05595.1"/>
    <property type="molecule type" value="Genomic_DNA"/>
</dbReference>
<dbReference type="RefSeq" id="WP_012564371.1">
    <property type="nucleotide sequence ID" value="NC_015684.1"/>
</dbReference>
<dbReference type="SMR" id="B6JIV1"/>
<dbReference type="STRING" id="504832.OCA5_c08730"/>
<dbReference type="KEGG" id="oca:OCAR_7241"/>
<dbReference type="KEGG" id="ocg:OCA5_c08730"/>
<dbReference type="PATRIC" id="fig|504832.7.peg.923"/>
<dbReference type="eggNOG" id="COG0323">
    <property type="taxonomic scope" value="Bacteria"/>
</dbReference>
<dbReference type="HOGENOM" id="CLU_004131_4_2_5"/>
<dbReference type="OrthoDB" id="9763467at2"/>
<dbReference type="Proteomes" id="UP000007730">
    <property type="component" value="Chromosome"/>
</dbReference>
<dbReference type="GO" id="GO:0032300">
    <property type="term" value="C:mismatch repair complex"/>
    <property type="evidence" value="ECO:0007669"/>
    <property type="project" value="InterPro"/>
</dbReference>
<dbReference type="GO" id="GO:0005524">
    <property type="term" value="F:ATP binding"/>
    <property type="evidence" value="ECO:0007669"/>
    <property type="project" value="InterPro"/>
</dbReference>
<dbReference type="GO" id="GO:0016887">
    <property type="term" value="F:ATP hydrolysis activity"/>
    <property type="evidence" value="ECO:0007669"/>
    <property type="project" value="InterPro"/>
</dbReference>
<dbReference type="GO" id="GO:0140664">
    <property type="term" value="F:ATP-dependent DNA damage sensor activity"/>
    <property type="evidence" value="ECO:0007669"/>
    <property type="project" value="InterPro"/>
</dbReference>
<dbReference type="GO" id="GO:0030983">
    <property type="term" value="F:mismatched DNA binding"/>
    <property type="evidence" value="ECO:0007669"/>
    <property type="project" value="InterPro"/>
</dbReference>
<dbReference type="GO" id="GO:0006298">
    <property type="term" value="P:mismatch repair"/>
    <property type="evidence" value="ECO:0007669"/>
    <property type="project" value="UniProtKB-UniRule"/>
</dbReference>
<dbReference type="CDD" id="cd16926">
    <property type="entry name" value="HATPase_MutL-MLH-PMS-like"/>
    <property type="match status" value="1"/>
</dbReference>
<dbReference type="CDD" id="cd00782">
    <property type="entry name" value="MutL_Trans"/>
    <property type="match status" value="1"/>
</dbReference>
<dbReference type="FunFam" id="3.30.565.10:FF:000003">
    <property type="entry name" value="DNA mismatch repair endonuclease MutL"/>
    <property type="match status" value="1"/>
</dbReference>
<dbReference type="Gene3D" id="3.30.230.10">
    <property type="match status" value="1"/>
</dbReference>
<dbReference type="Gene3D" id="3.30.565.10">
    <property type="entry name" value="Histidine kinase-like ATPase, C-terminal domain"/>
    <property type="match status" value="1"/>
</dbReference>
<dbReference type="Gene3D" id="3.30.1540.20">
    <property type="entry name" value="MutL, C-terminal domain, dimerisation subdomain"/>
    <property type="match status" value="1"/>
</dbReference>
<dbReference type="Gene3D" id="3.30.1370.100">
    <property type="entry name" value="MutL, C-terminal domain, regulatory subdomain"/>
    <property type="match status" value="1"/>
</dbReference>
<dbReference type="HAMAP" id="MF_00149">
    <property type="entry name" value="DNA_mis_repair"/>
    <property type="match status" value="1"/>
</dbReference>
<dbReference type="InterPro" id="IPR014762">
    <property type="entry name" value="DNA_mismatch_repair_CS"/>
</dbReference>
<dbReference type="InterPro" id="IPR020667">
    <property type="entry name" value="DNA_mismatch_repair_MutL"/>
</dbReference>
<dbReference type="InterPro" id="IPR013507">
    <property type="entry name" value="DNA_mismatch_S5_2-like"/>
</dbReference>
<dbReference type="InterPro" id="IPR036890">
    <property type="entry name" value="HATPase_C_sf"/>
</dbReference>
<dbReference type="InterPro" id="IPR002099">
    <property type="entry name" value="MutL/Mlh/PMS"/>
</dbReference>
<dbReference type="InterPro" id="IPR038973">
    <property type="entry name" value="MutL/Mlh/Pms-like"/>
</dbReference>
<dbReference type="InterPro" id="IPR014790">
    <property type="entry name" value="MutL_C"/>
</dbReference>
<dbReference type="InterPro" id="IPR042120">
    <property type="entry name" value="MutL_C_dimsub"/>
</dbReference>
<dbReference type="InterPro" id="IPR042121">
    <property type="entry name" value="MutL_C_regsub"/>
</dbReference>
<dbReference type="InterPro" id="IPR037198">
    <property type="entry name" value="MutL_C_sf"/>
</dbReference>
<dbReference type="InterPro" id="IPR020568">
    <property type="entry name" value="Ribosomal_Su5_D2-typ_SF"/>
</dbReference>
<dbReference type="InterPro" id="IPR014721">
    <property type="entry name" value="Ribsml_uS5_D2-typ_fold_subgr"/>
</dbReference>
<dbReference type="NCBIfam" id="TIGR00585">
    <property type="entry name" value="mutl"/>
    <property type="match status" value="1"/>
</dbReference>
<dbReference type="NCBIfam" id="NF000953">
    <property type="entry name" value="PRK00095.2-4"/>
    <property type="match status" value="1"/>
</dbReference>
<dbReference type="PANTHER" id="PTHR10073">
    <property type="entry name" value="DNA MISMATCH REPAIR PROTEIN MLH, PMS, MUTL"/>
    <property type="match status" value="1"/>
</dbReference>
<dbReference type="PANTHER" id="PTHR10073:SF12">
    <property type="entry name" value="DNA MISMATCH REPAIR PROTEIN MLH1"/>
    <property type="match status" value="1"/>
</dbReference>
<dbReference type="Pfam" id="PF01119">
    <property type="entry name" value="DNA_mis_repair"/>
    <property type="match status" value="1"/>
</dbReference>
<dbReference type="Pfam" id="PF13589">
    <property type="entry name" value="HATPase_c_3"/>
    <property type="match status" value="1"/>
</dbReference>
<dbReference type="Pfam" id="PF08676">
    <property type="entry name" value="MutL_C"/>
    <property type="match status" value="1"/>
</dbReference>
<dbReference type="SMART" id="SM01340">
    <property type="entry name" value="DNA_mis_repair"/>
    <property type="match status" value="1"/>
</dbReference>
<dbReference type="SMART" id="SM00853">
    <property type="entry name" value="MutL_C"/>
    <property type="match status" value="1"/>
</dbReference>
<dbReference type="SUPFAM" id="SSF55874">
    <property type="entry name" value="ATPase domain of HSP90 chaperone/DNA topoisomerase II/histidine kinase"/>
    <property type="match status" value="1"/>
</dbReference>
<dbReference type="SUPFAM" id="SSF118116">
    <property type="entry name" value="DNA mismatch repair protein MutL"/>
    <property type="match status" value="1"/>
</dbReference>
<dbReference type="SUPFAM" id="SSF54211">
    <property type="entry name" value="Ribosomal protein S5 domain 2-like"/>
    <property type="match status" value="1"/>
</dbReference>
<dbReference type="PROSITE" id="PS00058">
    <property type="entry name" value="DNA_MISMATCH_REPAIR_1"/>
    <property type="match status" value="1"/>
</dbReference>
<accession>B6JIV1</accession>
<accession>F8BZU0</accession>
<name>MUTL_AFIC5</name>
<gene>
    <name evidence="1" type="primary">mutL</name>
    <name type="ordered locus">OCAR_7241</name>
    <name type="ordered locus">OCA5_c08730</name>
</gene>
<protein>
    <recommendedName>
        <fullName evidence="1">DNA mismatch repair protein MutL</fullName>
    </recommendedName>
</protein>
<proteinExistence type="inferred from homology"/>
<comment type="function">
    <text evidence="1">This protein is involved in the repair of mismatches in DNA. It is required for dam-dependent methyl-directed DNA mismatch repair. May act as a 'molecular matchmaker', a protein that promotes the formation of a stable complex between two or more DNA-binding proteins in an ATP-dependent manner without itself being part of a final effector complex.</text>
</comment>
<comment type="similarity">
    <text evidence="1">Belongs to the DNA mismatch repair MutL/HexB family.</text>
</comment>
<organism>
    <name type="scientific">Afipia carboxidovorans (strain ATCC 49405 / DSM 1227 / KCTC 32145 / OM5)</name>
    <name type="common">Oligotropha carboxidovorans</name>
    <dbReference type="NCBI Taxonomy" id="504832"/>
    <lineage>
        <taxon>Bacteria</taxon>
        <taxon>Pseudomonadati</taxon>
        <taxon>Pseudomonadota</taxon>
        <taxon>Alphaproteobacteria</taxon>
        <taxon>Hyphomicrobiales</taxon>
        <taxon>Nitrobacteraceae</taxon>
        <taxon>Afipia</taxon>
    </lineage>
</organism>